<gene>
    <name type="primary">LHX3</name>
    <name type="synonym">LIM-3</name>
    <name type="synonym">LIM3</name>
</gene>
<organism>
    <name type="scientific">Gallus gallus</name>
    <name type="common">Chicken</name>
    <dbReference type="NCBI Taxonomy" id="9031"/>
    <lineage>
        <taxon>Eukaryota</taxon>
        <taxon>Metazoa</taxon>
        <taxon>Chordata</taxon>
        <taxon>Craniata</taxon>
        <taxon>Vertebrata</taxon>
        <taxon>Euteleostomi</taxon>
        <taxon>Archelosauria</taxon>
        <taxon>Archosauria</taxon>
        <taxon>Dinosauria</taxon>
        <taxon>Saurischia</taxon>
        <taxon>Theropoda</taxon>
        <taxon>Coelurosauria</taxon>
        <taxon>Aves</taxon>
        <taxon>Neognathae</taxon>
        <taxon>Galloanserae</taxon>
        <taxon>Galliformes</taxon>
        <taxon>Phasianidae</taxon>
        <taxon>Phasianinae</taxon>
        <taxon>Gallus</taxon>
    </lineage>
</organism>
<proteinExistence type="evidence at transcript level"/>
<accession>P53412</accession>
<reference key="1">
    <citation type="journal article" date="1994" name="Cell">
        <title>Topographic organization of embryonic motor neurons defined by expression of LIM homeobox genes.</title>
        <authorList>
            <person name="Tsuchida T."/>
            <person name="Ensini M."/>
            <person name="Morton S.B."/>
            <person name="Baldassare M."/>
            <person name="Edlund T."/>
            <person name="Jessell T.M."/>
            <person name="Pfaff S.L."/>
        </authorList>
    </citation>
    <scope>NUCLEOTIDE SEQUENCE [MRNA]</scope>
    <scope>DEVELOPMENTAL STAGE</scope>
    <source>
        <tissue>Spinal cord</tissue>
    </source>
</reference>
<feature type="chain" id="PRO_0000075784" description="LIM/homeobox protein Lhx3">
    <location>
        <begin position="1"/>
        <end position="395"/>
    </location>
</feature>
<feature type="domain" description="LIM zinc-binding 1" evidence="3">
    <location>
        <begin position="28"/>
        <end position="78"/>
    </location>
</feature>
<feature type="domain" description="LIM zinc-binding 2" evidence="3">
    <location>
        <begin position="87"/>
        <end position="141"/>
    </location>
</feature>
<feature type="DNA-binding region" description="Homeobox" evidence="2">
    <location>
        <begin position="154"/>
        <end position="213"/>
    </location>
</feature>
<feature type="region of interest" description="Disordered" evidence="4">
    <location>
        <begin position="209"/>
        <end position="325"/>
    </location>
</feature>
<feature type="region of interest" description="Disordered" evidence="4">
    <location>
        <begin position="348"/>
        <end position="395"/>
    </location>
</feature>
<feature type="compositionally biased region" description="Polar residues" evidence="4">
    <location>
        <begin position="257"/>
        <end position="276"/>
    </location>
</feature>
<keyword id="KW-0010">Activator</keyword>
<keyword id="KW-0238">DNA-binding</keyword>
<keyword id="KW-0371">Homeobox</keyword>
<keyword id="KW-0440">LIM domain</keyword>
<keyword id="KW-0479">Metal-binding</keyword>
<keyword id="KW-0539">Nucleus</keyword>
<keyword id="KW-1185">Reference proteome</keyword>
<keyword id="KW-0677">Repeat</keyword>
<keyword id="KW-0804">Transcription</keyword>
<keyword id="KW-0805">Transcription regulation</keyword>
<keyword id="KW-0862">Zinc</keyword>
<name>LHX3_CHICK</name>
<comment type="function">
    <text evidence="1">Transcription factor (By similarity). Defines subclasses of motoneurons that segregate into columns in the spinal cord and select distinct axon pathways. Acts in conjunction with LIM-1, ISL-1 and ISL-2.</text>
</comment>
<comment type="subcellular location">
    <subcellularLocation>
        <location evidence="6">Nucleus</location>
    </subcellularLocation>
</comment>
<comment type="developmental stage">
    <text evidence="5">Expressed prior to the formation of distinct motor axon pathways and before the segregation of motor neurons into columns. Expression restricted to the medial subdivision of the median motor column (MMCm).</text>
</comment>
<protein>
    <recommendedName>
        <fullName>LIM/homeobox protein Lhx3</fullName>
        <shortName>LIM homeobox protein 3</shortName>
    </recommendedName>
    <alternativeName>
        <fullName>Homeobox protein LIM-3</fullName>
    </alternativeName>
</protein>
<evidence type="ECO:0000250" key="1">
    <source>
        <dbReference type="UniProtKB" id="P50481"/>
    </source>
</evidence>
<evidence type="ECO:0000255" key="2">
    <source>
        <dbReference type="PROSITE-ProRule" id="PRU00108"/>
    </source>
</evidence>
<evidence type="ECO:0000255" key="3">
    <source>
        <dbReference type="PROSITE-ProRule" id="PRU00125"/>
    </source>
</evidence>
<evidence type="ECO:0000256" key="4">
    <source>
        <dbReference type="SAM" id="MobiDB-lite"/>
    </source>
</evidence>
<evidence type="ECO:0000269" key="5">
    <source>
    </source>
</evidence>
<evidence type="ECO:0000305" key="6"/>
<dbReference type="EMBL" id="L35570">
    <property type="protein sequence ID" value="AAA62174.1"/>
    <property type="molecule type" value="mRNA"/>
</dbReference>
<dbReference type="PIR" id="I50376">
    <property type="entry name" value="I50376"/>
</dbReference>
<dbReference type="RefSeq" id="NP_001025506.1">
    <property type="nucleotide sequence ID" value="NM_001030335.2"/>
</dbReference>
<dbReference type="SMR" id="P53412"/>
<dbReference type="FunCoup" id="P53412">
    <property type="interactions" value="6"/>
</dbReference>
<dbReference type="STRING" id="9031.ENSGALP00000002660"/>
<dbReference type="PaxDb" id="9031-ENSGALP00000002660"/>
<dbReference type="Ensembl" id="ENSGALT00010068351.1">
    <property type="protein sequence ID" value="ENSGALP00010042094.1"/>
    <property type="gene ID" value="ENSGALG00010028203.1"/>
</dbReference>
<dbReference type="GeneID" id="373940"/>
<dbReference type="KEGG" id="gga:373940"/>
<dbReference type="CTD" id="8022"/>
<dbReference type="VEuPathDB" id="HostDB:geneid_373940"/>
<dbReference type="eggNOG" id="KOG4577">
    <property type="taxonomic scope" value="Eukaryota"/>
</dbReference>
<dbReference type="GeneTree" id="ENSGT00940000160316"/>
<dbReference type="HOGENOM" id="CLU_027802_5_0_1"/>
<dbReference type="InParanoid" id="P53412"/>
<dbReference type="OrthoDB" id="10068367at2759"/>
<dbReference type="PhylomeDB" id="P53412"/>
<dbReference type="TreeFam" id="TF315442"/>
<dbReference type="PRO" id="PR:P53412"/>
<dbReference type="Proteomes" id="UP000000539">
    <property type="component" value="Chromosome 17"/>
</dbReference>
<dbReference type="GO" id="GO:0000785">
    <property type="term" value="C:chromatin"/>
    <property type="evidence" value="ECO:0007669"/>
    <property type="project" value="Ensembl"/>
</dbReference>
<dbReference type="GO" id="GO:0005634">
    <property type="term" value="C:nucleus"/>
    <property type="evidence" value="ECO:0000318"/>
    <property type="project" value="GO_Central"/>
</dbReference>
<dbReference type="GO" id="GO:0005667">
    <property type="term" value="C:transcription regulator complex"/>
    <property type="evidence" value="ECO:0007669"/>
    <property type="project" value="Ensembl"/>
</dbReference>
<dbReference type="GO" id="GO:0001228">
    <property type="term" value="F:DNA-binding transcription activator activity, RNA polymerase II-specific"/>
    <property type="evidence" value="ECO:0007669"/>
    <property type="project" value="Ensembl"/>
</dbReference>
<dbReference type="GO" id="GO:0000981">
    <property type="term" value="F:DNA-binding transcription factor activity, RNA polymerase II-specific"/>
    <property type="evidence" value="ECO:0000318"/>
    <property type="project" value="GO_Central"/>
</dbReference>
<dbReference type="GO" id="GO:0000978">
    <property type="term" value="F:RNA polymerase II cis-regulatory region sequence-specific DNA binding"/>
    <property type="evidence" value="ECO:0007669"/>
    <property type="project" value="Ensembl"/>
</dbReference>
<dbReference type="GO" id="GO:0000977">
    <property type="term" value="F:RNA polymerase II transcription regulatory region sequence-specific DNA binding"/>
    <property type="evidence" value="ECO:0000318"/>
    <property type="project" value="GO_Central"/>
</dbReference>
<dbReference type="GO" id="GO:0061629">
    <property type="term" value="F:RNA polymerase II-specific DNA-binding transcription factor binding"/>
    <property type="evidence" value="ECO:0007669"/>
    <property type="project" value="Ensembl"/>
</dbReference>
<dbReference type="GO" id="GO:0001223">
    <property type="term" value="F:transcription coactivator binding"/>
    <property type="evidence" value="ECO:0007669"/>
    <property type="project" value="Ensembl"/>
</dbReference>
<dbReference type="GO" id="GO:0008270">
    <property type="term" value="F:zinc ion binding"/>
    <property type="evidence" value="ECO:0007669"/>
    <property type="project" value="InterPro"/>
</dbReference>
<dbReference type="GO" id="GO:0006915">
    <property type="term" value="P:apoptotic process"/>
    <property type="evidence" value="ECO:0007669"/>
    <property type="project" value="Ensembl"/>
</dbReference>
<dbReference type="GO" id="GO:0048839">
    <property type="term" value="P:inner ear development"/>
    <property type="evidence" value="ECO:0007669"/>
    <property type="project" value="Ensembl"/>
</dbReference>
<dbReference type="GO" id="GO:0021526">
    <property type="term" value="P:medial motor column neuron differentiation"/>
    <property type="evidence" value="ECO:0007669"/>
    <property type="project" value="Ensembl"/>
</dbReference>
<dbReference type="GO" id="GO:0008045">
    <property type="term" value="P:motor neuron axon guidance"/>
    <property type="evidence" value="ECO:0007669"/>
    <property type="project" value="Ensembl"/>
</dbReference>
<dbReference type="GO" id="GO:0043066">
    <property type="term" value="P:negative regulation of apoptotic process"/>
    <property type="evidence" value="ECO:0007669"/>
    <property type="project" value="Ensembl"/>
</dbReference>
<dbReference type="GO" id="GO:0030182">
    <property type="term" value="P:neuron differentiation"/>
    <property type="evidence" value="ECO:0000318"/>
    <property type="project" value="GO_Central"/>
</dbReference>
<dbReference type="GO" id="GO:0060127">
    <property type="term" value="P:prolactin secreting cell differentiation"/>
    <property type="evidence" value="ECO:0007669"/>
    <property type="project" value="Ensembl"/>
</dbReference>
<dbReference type="GO" id="GO:0006357">
    <property type="term" value="P:regulation of transcription by RNA polymerase II"/>
    <property type="evidence" value="ECO:0000318"/>
    <property type="project" value="GO_Central"/>
</dbReference>
<dbReference type="GO" id="GO:0060126">
    <property type="term" value="P:somatotropin secreting cell differentiation"/>
    <property type="evidence" value="ECO:0007669"/>
    <property type="project" value="Ensembl"/>
</dbReference>
<dbReference type="GO" id="GO:0021527">
    <property type="term" value="P:spinal cord association neuron differentiation"/>
    <property type="evidence" value="ECO:0007669"/>
    <property type="project" value="Ensembl"/>
</dbReference>
<dbReference type="GO" id="GO:0021520">
    <property type="term" value="P:spinal cord motor neuron cell fate specification"/>
    <property type="evidence" value="ECO:0007669"/>
    <property type="project" value="Ensembl"/>
</dbReference>
<dbReference type="GO" id="GO:0060129">
    <property type="term" value="P:thyroid-stimulating hormone-secreting cell differentiation"/>
    <property type="evidence" value="ECO:0007669"/>
    <property type="project" value="Ensembl"/>
</dbReference>
<dbReference type="GO" id="GO:0021521">
    <property type="term" value="P:ventral spinal cord interneuron specification"/>
    <property type="evidence" value="ECO:0007669"/>
    <property type="project" value="Ensembl"/>
</dbReference>
<dbReference type="CDD" id="cd00086">
    <property type="entry name" value="homeodomain"/>
    <property type="match status" value="1"/>
</dbReference>
<dbReference type="CDD" id="cd09467">
    <property type="entry name" value="LIM1_Lhx3b"/>
    <property type="match status" value="1"/>
</dbReference>
<dbReference type="CDD" id="cd09376">
    <property type="entry name" value="LIM2_Lhx3_Lhx4"/>
    <property type="match status" value="1"/>
</dbReference>
<dbReference type="FunFam" id="2.10.110.10:FF:000120">
    <property type="entry name" value="Insulin gene enhancer protein ISL-2"/>
    <property type="match status" value="1"/>
</dbReference>
<dbReference type="FunFam" id="1.10.10.60:FF:000219">
    <property type="entry name" value="LIM/homeobox protein Lhx3"/>
    <property type="match status" value="1"/>
</dbReference>
<dbReference type="FunFam" id="2.10.110.10:FF:000032">
    <property type="entry name" value="LIM/homeobox protein Lhx3"/>
    <property type="match status" value="1"/>
</dbReference>
<dbReference type="Gene3D" id="2.10.110.10">
    <property type="entry name" value="Cysteine Rich Protein"/>
    <property type="match status" value="2"/>
</dbReference>
<dbReference type="Gene3D" id="1.10.10.60">
    <property type="entry name" value="Homeodomain-like"/>
    <property type="match status" value="1"/>
</dbReference>
<dbReference type="InterPro" id="IPR001356">
    <property type="entry name" value="HD"/>
</dbReference>
<dbReference type="InterPro" id="IPR017970">
    <property type="entry name" value="Homeobox_CS"/>
</dbReference>
<dbReference type="InterPro" id="IPR009057">
    <property type="entry name" value="Homeodomain-like_sf"/>
</dbReference>
<dbReference type="InterPro" id="IPR049594">
    <property type="entry name" value="Lhx3/4-like_LIM2"/>
</dbReference>
<dbReference type="InterPro" id="IPR049593">
    <property type="entry name" value="Lhx3_LIM1"/>
</dbReference>
<dbReference type="InterPro" id="IPR050453">
    <property type="entry name" value="LIM_Homeobox_TF"/>
</dbReference>
<dbReference type="InterPro" id="IPR001781">
    <property type="entry name" value="Znf_LIM"/>
</dbReference>
<dbReference type="PANTHER" id="PTHR24208">
    <property type="entry name" value="LIM/HOMEOBOX PROTEIN LHX"/>
    <property type="match status" value="1"/>
</dbReference>
<dbReference type="PANTHER" id="PTHR24208:SF91">
    <property type="entry name" value="LIM_HOMEOBOX PROTEIN LHX3"/>
    <property type="match status" value="1"/>
</dbReference>
<dbReference type="Pfam" id="PF00046">
    <property type="entry name" value="Homeodomain"/>
    <property type="match status" value="1"/>
</dbReference>
<dbReference type="Pfam" id="PF00412">
    <property type="entry name" value="LIM"/>
    <property type="match status" value="2"/>
</dbReference>
<dbReference type="SMART" id="SM00389">
    <property type="entry name" value="HOX"/>
    <property type="match status" value="1"/>
</dbReference>
<dbReference type="SMART" id="SM00132">
    <property type="entry name" value="LIM"/>
    <property type="match status" value="2"/>
</dbReference>
<dbReference type="SUPFAM" id="SSF57716">
    <property type="entry name" value="Glucocorticoid receptor-like (DNA-binding domain)"/>
    <property type="match status" value="2"/>
</dbReference>
<dbReference type="SUPFAM" id="SSF46689">
    <property type="entry name" value="Homeodomain-like"/>
    <property type="match status" value="1"/>
</dbReference>
<dbReference type="PROSITE" id="PS00027">
    <property type="entry name" value="HOMEOBOX_1"/>
    <property type="match status" value="1"/>
</dbReference>
<dbReference type="PROSITE" id="PS50071">
    <property type="entry name" value="HOMEOBOX_2"/>
    <property type="match status" value="1"/>
</dbReference>
<dbReference type="PROSITE" id="PS00478">
    <property type="entry name" value="LIM_DOMAIN_1"/>
    <property type="match status" value="2"/>
</dbReference>
<dbReference type="PROSITE" id="PS50023">
    <property type="entry name" value="LIM_DOMAIN_2"/>
    <property type="match status" value="2"/>
</dbReference>
<sequence length="395" mass="43805">MLLERVRAGSEKAAELCPFPRSPEIPLCAGCNQHIVDRFILKVLDRHWHSKCLKCSDCQTQLAEKCFSRGDGVYCKEDFFKRFGTKCAACQQGIPPTQVVRRAQDFVYHLHCFACIVCKRQLATGDEFYLMEDSRLVCKADYETAKQREAESTAKRPRTTITAKQLETLKNAYNNSPKPARHVREQLSSETGLDMRVVQVWFQNRRAKEKRLKKDAGRQRWGQYFRNMKRSRGTSKSDKDSIQEEGPDSDAEVSFTDEPSMSEMSHSNGIYSNLSEASPALGRQAGTNGGFSLDHSGIPAQDQYHDLRSNSPYGIPQSPASLQALPGHQPLISSLVYPDSGLGIMGQGGQGVPQSMRVLAGNGPSSDLSTGSSGGYPDFPASPASWLDEVDHAQF</sequence>